<gene>
    <name evidence="1" type="primary">murA</name>
    <name type="ordered locus">PMT_0332</name>
</gene>
<reference key="1">
    <citation type="journal article" date="2003" name="Nature">
        <title>Genome divergence in two Prochlorococcus ecotypes reflects oceanic niche differentiation.</title>
        <authorList>
            <person name="Rocap G."/>
            <person name="Larimer F.W."/>
            <person name="Lamerdin J.E."/>
            <person name="Malfatti S."/>
            <person name="Chain P."/>
            <person name="Ahlgren N.A."/>
            <person name="Arellano A."/>
            <person name="Coleman M."/>
            <person name="Hauser L."/>
            <person name="Hess W.R."/>
            <person name="Johnson Z.I."/>
            <person name="Land M.L."/>
            <person name="Lindell D."/>
            <person name="Post A.F."/>
            <person name="Regala W."/>
            <person name="Shah M."/>
            <person name="Shaw S.L."/>
            <person name="Steglich C."/>
            <person name="Sullivan M.B."/>
            <person name="Ting C.S."/>
            <person name="Tolonen A."/>
            <person name="Webb E.A."/>
            <person name="Zinser E.R."/>
            <person name="Chisholm S.W."/>
        </authorList>
    </citation>
    <scope>NUCLEOTIDE SEQUENCE [LARGE SCALE GENOMIC DNA]</scope>
    <source>
        <strain>MIT 9313</strain>
    </source>
</reference>
<sequence>MPAAVSISQEILKPHLEIQGGHTLSRELKVSGAKNSALVLMTSALLSEGPLELHNVPQLTDIQGMADILASLGVRVKRSQETVWLQADGLHHAEPPYDLVNGLRASFFCIGPLLGRLGHAKVPLPGGCRIGARPVVEHIRGLKALGAMVKVEHGVVTASVPGTSRRLKGAAIVLDCPSVGATETILMAAVLAEGTSTIENAAQEPEVQDLAKMLNAMGARVSGAGGPIITIEGVERLHGCNYSVIPDRIEAGTFLIAAAITRSIVRVSPVIPEHLNAVLQKLRDCGCTLEIDKQGITLIPGDLHGVDIITQPFPGFPTDLQAPFMALLTTAKGTSVVTEKIYENRMQHVAELQRMGASIRLQGNTAVVEGIPQLSAAPVSGNDLRAAAALVLAGLAAHGISQVDGLNHLDRGYDEIETKLNASGAHILRHQPSG</sequence>
<protein>
    <recommendedName>
        <fullName evidence="1">UDP-N-acetylglucosamine 1-carboxyvinyltransferase</fullName>
        <ecNumber evidence="1">2.5.1.7</ecNumber>
    </recommendedName>
    <alternativeName>
        <fullName evidence="1">Enoylpyruvate transferase</fullName>
    </alternativeName>
    <alternativeName>
        <fullName evidence="1">UDP-N-acetylglucosamine enolpyruvyl transferase</fullName>
        <shortName evidence="1">EPT</shortName>
    </alternativeName>
</protein>
<accession>Q7V8L0</accession>
<organism>
    <name type="scientific">Prochlorococcus marinus (strain MIT 9313)</name>
    <dbReference type="NCBI Taxonomy" id="74547"/>
    <lineage>
        <taxon>Bacteria</taxon>
        <taxon>Bacillati</taxon>
        <taxon>Cyanobacteriota</taxon>
        <taxon>Cyanophyceae</taxon>
        <taxon>Synechococcales</taxon>
        <taxon>Prochlorococcaceae</taxon>
        <taxon>Prochlorococcus</taxon>
    </lineage>
</organism>
<evidence type="ECO:0000255" key="1">
    <source>
        <dbReference type="HAMAP-Rule" id="MF_00111"/>
    </source>
</evidence>
<name>MURA_PROMM</name>
<keyword id="KW-0131">Cell cycle</keyword>
<keyword id="KW-0132">Cell division</keyword>
<keyword id="KW-0133">Cell shape</keyword>
<keyword id="KW-0961">Cell wall biogenesis/degradation</keyword>
<keyword id="KW-0963">Cytoplasm</keyword>
<keyword id="KW-0573">Peptidoglycan synthesis</keyword>
<keyword id="KW-0670">Pyruvate</keyword>
<keyword id="KW-1185">Reference proteome</keyword>
<keyword id="KW-0808">Transferase</keyword>
<dbReference type="EC" id="2.5.1.7" evidence="1"/>
<dbReference type="EMBL" id="BX548175">
    <property type="protein sequence ID" value="CAE20507.1"/>
    <property type="molecule type" value="Genomic_DNA"/>
</dbReference>
<dbReference type="RefSeq" id="WP_011129711.1">
    <property type="nucleotide sequence ID" value="NC_005071.1"/>
</dbReference>
<dbReference type="SMR" id="Q7V8L0"/>
<dbReference type="KEGG" id="pmt:PMT_0332"/>
<dbReference type="eggNOG" id="COG0766">
    <property type="taxonomic scope" value="Bacteria"/>
</dbReference>
<dbReference type="HOGENOM" id="CLU_027387_0_0_3"/>
<dbReference type="OrthoDB" id="9803760at2"/>
<dbReference type="UniPathway" id="UPA00219"/>
<dbReference type="Proteomes" id="UP000001423">
    <property type="component" value="Chromosome"/>
</dbReference>
<dbReference type="GO" id="GO:0005737">
    <property type="term" value="C:cytoplasm"/>
    <property type="evidence" value="ECO:0007669"/>
    <property type="project" value="UniProtKB-SubCell"/>
</dbReference>
<dbReference type="GO" id="GO:0008760">
    <property type="term" value="F:UDP-N-acetylglucosamine 1-carboxyvinyltransferase activity"/>
    <property type="evidence" value="ECO:0007669"/>
    <property type="project" value="UniProtKB-UniRule"/>
</dbReference>
<dbReference type="GO" id="GO:0051301">
    <property type="term" value="P:cell division"/>
    <property type="evidence" value="ECO:0007669"/>
    <property type="project" value="UniProtKB-KW"/>
</dbReference>
<dbReference type="GO" id="GO:0071555">
    <property type="term" value="P:cell wall organization"/>
    <property type="evidence" value="ECO:0007669"/>
    <property type="project" value="UniProtKB-KW"/>
</dbReference>
<dbReference type="GO" id="GO:0009252">
    <property type="term" value="P:peptidoglycan biosynthetic process"/>
    <property type="evidence" value="ECO:0007669"/>
    <property type="project" value="UniProtKB-UniRule"/>
</dbReference>
<dbReference type="GO" id="GO:0008360">
    <property type="term" value="P:regulation of cell shape"/>
    <property type="evidence" value="ECO:0007669"/>
    <property type="project" value="UniProtKB-KW"/>
</dbReference>
<dbReference type="GO" id="GO:0019277">
    <property type="term" value="P:UDP-N-acetylgalactosamine biosynthetic process"/>
    <property type="evidence" value="ECO:0007669"/>
    <property type="project" value="InterPro"/>
</dbReference>
<dbReference type="CDD" id="cd01555">
    <property type="entry name" value="UdpNAET"/>
    <property type="match status" value="1"/>
</dbReference>
<dbReference type="FunFam" id="3.65.10.10:FF:000001">
    <property type="entry name" value="UDP-N-acetylglucosamine 1-carboxyvinyltransferase"/>
    <property type="match status" value="1"/>
</dbReference>
<dbReference type="Gene3D" id="3.65.10.10">
    <property type="entry name" value="Enolpyruvate transferase domain"/>
    <property type="match status" value="2"/>
</dbReference>
<dbReference type="HAMAP" id="MF_00111">
    <property type="entry name" value="MurA"/>
    <property type="match status" value="1"/>
</dbReference>
<dbReference type="InterPro" id="IPR001986">
    <property type="entry name" value="Enolpyruvate_Tfrase_dom"/>
</dbReference>
<dbReference type="InterPro" id="IPR036968">
    <property type="entry name" value="Enolpyruvate_Tfrase_sf"/>
</dbReference>
<dbReference type="InterPro" id="IPR050068">
    <property type="entry name" value="MurA_subfamily"/>
</dbReference>
<dbReference type="InterPro" id="IPR013792">
    <property type="entry name" value="RNA3'P_cycl/enolpyr_Trfase_a/b"/>
</dbReference>
<dbReference type="InterPro" id="IPR005750">
    <property type="entry name" value="UDP_GlcNAc_COvinyl_MurA"/>
</dbReference>
<dbReference type="NCBIfam" id="TIGR01072">
    <property type="entry name" value="murA"/>
    <property type="match status" value="1"/>
</dbReference>
<dbReference type="NCBIfam" id="NF006873">
    <property type="entry name" value="PRK09369.1"/>
    <property type="match status" value="1"/>
</dbReference>
<dbReference type="PANTHER" id="PTHR43783">
    <property type="entry name" value="UDP-N-ACETYLGLUCOSAMINE 1-CARBOXYVINYLTRANSFERASE"/>
    <property type="match status" value="1"/>
</dbReference>
<dbReference type="PANTHER" id="PTHR43783:SF1">
    <property type="entry name" value="UDP-N-ACETYLGLUCOSAMINE 1-CARBOXYVINYLTRANSFERASE"/>
    <property type="match status" value="1"/>
</dbReference>
<dbReference type="Pfam" id="PF00275">
    <property type="entry name" value="EPSP_synthase"/>
    <property type="match status" value="1"/>
</dbReference>
<dbReference type="SUPFAM" id="SSF55205">
    <property type="entry name" value="EPT/RTPC-like"/>
    <property type="match status" value="1"/>
</dbReference>
<proteinExistence type="inferred from homology"/>
<comment type="function">
    <text evidence="1">Cell wall formation. Adds enolpyruvyl to UDP-N-acetylglucosamine.</text>
</comment>
<comment type="catalytic activity">
    <reaction evidence="1">
        <text>phosphoenolpyruvate + UDP-N-acetyl-alpha-D-glucosamine = UDP-N-acetyl-3-O-(1-carboxyvinyl)-alpha-D-glucosamine + phosphate</text>
        <dbReference type="Rhea" id="RHEA:18681"/>
        <dbReference type="ChEBI" id="CHEBI:43474"/>
        <dbReference type="ChEBI" id="CHEBI:57705"/>
        <dbReference type="ChEBI" id="CHEBI:58702"/>
        <dbReference type="ChEBI" id="CHEBI:68483"/>
        <dbReference type="EC" id="2.5.1.7"/>
    </reaction>
</comment>
<comment type="pathway">
    <text evidence="1">Cell wall biogenesis; peptidoglycan biosynthesis.</text>
</comment>
<comment type="subcellular location">
    <subcellularLocation>
        <location evidence="1">Cytoplasm</location>
    </subcellularLocation>
</comment>
<comment type="similarity">
    <text evidence="1">Belongs to the EPSP synthase family. MurA subfamily.</text>
</comment>
<feature type="chain" id="PRO_0000231243" description="UDP-N-acetylglucosamine 1-carboxyvinyltransferase">
    <location>
        <begin position="1"/>
        <end position="434"/>
    </location>
</feature>
<feature type="active site" description="Proton donor" evidence="1">
    <location>
        <position position="128"/>
    </location>
</feature>
<feature type="binding site" evidence="1">
    <location>
        <begin position="34"/>
        <end position="35"/>
    </location>
    <ligand>
        <name>phosphoenolpyruvate</name>
        <dbReference type="ChEBI" id="CHEBI:58702"/>
    </ligand>
</feature>
<feature type="binding site" evidence="1">
    <location>
        <position position="104"/>
    </location>
    <ligand>
        <name>UDP-N-acetyl-alpha-D-glucosamine</name>
        <dbReference type="ChEBI" id="CHEBI:57705"/>
    </ligand>
</feature>
<feature type="binding site" evidence="1">
    <location>
        <position position="319"/>
    </location>
    <ligand>
        <name>UDP-N-acetyl-alpha-D-glucosamine</name>
        <dbReference type="ChEBI" id="CHEBI:57705"/>
    </ligand>
</feature>
<feature type="binding site" evidence="1">
    <location>
        <position position="341"/>
    </location>
    <ligand>
        <name>UDP-N-acetyl-alpha-D-glucosamine</name>
        <dbReference type="ChEBI" id="CHEBI:57705"/>
    </ligand>
</feature>
<feature type="modified residue" description="2-(S-cysteinyl)pyruvic acid O-phosphothioketal" evidence="1">
    <location>
        <position position="128"/>
    </location>
</feature>